<feature type="chain" id="PRO_0000328774" description="Carbohydrate deacetylase">
    <location>
        <begin position="1"/>
        <end position="323"/>
    </location>
</feature>
<feature type="active site" description="Proton acceptor" evidence="1">
    <location>
        <position position="13"/>
    </location>
</feature>
<feature type="binding site" evidence="1">
    <location>
        <position position="14"/>
    </location>
    <ligand>
        <name>Mg(2+)</name>
        <dbReference type="ChEBI" id="CHEBI:18420"/>
    </ligand>
</feature>
<feature type="binding site" evidence="1">
    <location>
        <position position="134"/>
    </location>
    <ligand>
        <name>Mg(2+)</name>
        <dbReference type="ChEBI" id="CHEBI:18420"/>
    </ligand>
</feature>
<feature type="splice variant" id="VSP_032784" description="In isoform 3." evidence="2">
    <original>EELEAQLSCFRELLGRAPTHADGHQH</original>
    <variation>SRSYRRMLARTPRAPPGGCGRSSRPN</variation>
    <location>
        <begin position="111"/>
        <end position="136"/>
    </location>
</feature>
<feature type="splice variant" id="VSP_032785" description="In isoform 3." evidence="2">
    <location>
        <begin position="137"/>
        <end position="323"/>
    </location>
</feature>
<feature type="splice variant" id="VSP_032786" description="In isoform 2." evidence="2">
    <original>VCQVFAE</original>
    <variation>GQTPSWA</variation>
    <location>
        <begin position="143"/>
        <end position="149"/>
    </location>
</feature>
<feature type="splice variant" id="VSP_032787" description="In isoform 2." evidence="2">
    <location>
        <begin position="150"/>
        <end position="323"/>
    </location>
</feature>
<feature type="sequence variant" id="VAR_042519" description="In dbSNP:rs2298428.">
    <original>A</original>
    <variation>T</variation>
    <location>
        <position position="263"/>
    </location>
</feature>
<sequence length="323" mass="34466">MSRPRMRLVVTADDFGYCPRRDEGIVEAFLAGAVTSVSLLVNGAATESAAELARRHSIPTGLHANLSEGRPVGPARRGASSLLGPEGFFLGKMGFREAVAAGDVDLPQVREELEAQLSCFRELLGRAPTHADGHQHVHVLPGVCQVFAEALQAYGVRFTRLPLERGVGGCTWLEAPARAFACAVERDARAAVGPFSRHGLRWTDAFVGLSTCGRHMSAHRVSGALARVLEGTLAGHTLTAELMAHPGYPSVPPTGGCGEGPDAFSCSWERLHELRVLTAPTLRAQLAQDGVQLCALDDLDSKRPGEEVPCEPTLEPFLEPSLL</sequence>
<keyword id="KW-0025">Alternative splicing</keyword>
<keyword id="KW-0119">Carbohydrate metabolism</keyword>
<keyword id="KW-0378">Hydrolase</keyword>
<keyword id="KW-0460">Magnesium</keyword>
<keyword id="KW-0479">Metal-binding</keyword>
<keyword id="KW-1267">Proteomics identification</keyword>
<keyword id="KW-1185">Reference proteome</keyword>
<evidence type="ECO:0000250" key="1">
    <source>
        <dbReference type="UniProtKB" id="Q53WD3"/>
    </source>
</evidence>
<evidence type="ECO:0000303" key="2">
    <source>
    </source>
</evidence>
<evidence type="ECO:0000305" key="3"/>
<dbReference type="EC" id="3.5.1.-" evidence="1"/>
<dbReference type="EMBL" id="AP000553">
    <property type="status" value="NOT_ANNOTATED_CDS"/>
    <property type="molecule type" value="Genomic_DNA"/>
</dbReference>
<dbReference type="EMBL" id="CH471095">
    <property type="protein sequence ID" value="EAW59461.1"/>
    <property type="molecule type" value="Genomic_DNA"/>
</dbReference>
<dbReference type="EMBL" id="CH471095">
    <property type="protein sequence ID" value="EAW59463.1"/>
    <property type="molecule type" value="Genomic_DNA"/>
</dbReference>
<dbReference type="EMBL" id="BC096754">
    <property type="status" value="NOT_ANNOTATED_CDS"/>
    <property type="molecule type" value="mRNA"/>
</dbReference>
<dbReference type="EMBL" id="BC110075">
    <property type="protein sequence ID" value="AAI10076.1"/>
    <property type="molecule type" value="mRNA"/>
</dbReference>
<dbReference type="EMBL" id="BC133043">
    <property type="protein sequence ID" value="AAI33044.1"/>
    <property type="molecule type" value="mRNA"/>
</dbReference>
<dbReference type="EMBL" id="BC133047">
    <property type="protein sequence ID" value="AAI33048.1"/>
    <property type="molecule type" value="mRNA"/>
</dbReference>
<dbReference type="CCDS" id="CCDS33613.1">
    <molecule id="A8MPS7-1"/>
</dbReference>
<dbReference type="CCDS" id="CCDS93126.1">
    <molecule id="A8MPS7-2"/>
</dbReference>
<dbReference type="RefSeq" id="NP_001017964.1">
    <molecule id="A8MPS7-1"/>
    <property type="nucleotide sequence ID" value="NM_001017964.2"/>
</dbReference>
<dbReference type="RefSeq" id="NP_001358279.1">
    <molecule id="A8MPS7-2"/>
    <property type="nucleotide sequence ID" value="NM_001371350.1"/>
</dbReference>
<dbReference type="RefSeq" id="XP_011528208.1">
    <property type="nucleotide sequence ID" value="XM_011529906.2"/>
</dbReference>
<dbReference type="SMR" id="A8MPS7"/>
<dbReference type="BioGRID" id="127272">
    <property type="interactions" value="12"/>
</dbReference>
<dbReference type="FunCoup" id="A8MPS7">
    <property type="interactions" value="145"/>
</dbReference>
<dbReference type="IntAct" id="A8MPS7">
    <property type="interactions" value="3"/>
</dbReference>
<dbReference type="STRING" id="9606.ENSP00000292778"/>
<dbReference type="GlyGen" id="A8MPS7">
    <property type="glycosylation" value="1 site"/>
</dbReference>
<dbReference type="iPTMnet" id="A8MPS7"/>
<dbReference type="PhosphoSitePlus" id="A8MPS7"/>
<dbReference type="BioMuta" id="YDJC"/>
<dbReference type="jPOST" id="A8MPS7"/>
<dbReference type="MassIVE" id="A8MPS7"/>
<dbReference type="PaxDb" id="9606-ENSP00000292778"/>
<dbReference type="PeptideAtlas" id="A8MPS7"/>
<dbReference type="ProteomicsDB" id="1911">
    <molecule id="A8MPS7-1"/>
</dbReference>
<dbReference type="ProteomicsDB" id="1912">
    <molecule id="A8MPS7-2"/>
</dbReference>
<dbReference type="ProteomicsDB" id="1913">
    <molecule id="A8MPS7-3"/>
</dbReference>
<dbReference type="Pumba" id="A8MPS7"/>
<dbReference type="Antibodypedia" id="54203">
    <property type="antibodies" value="65 antibodies from 11 providers"/>
</dbReference>
<dbReference type="DNASU" id="150223"/>
<dbReference type="Ensembl" id="ENST00000292778.11">
    <molecule id="A8MPS7-1"/>
    <property type="protein sequence ID" value="ENSP00000292778.6"/>
    <property type="gene ID" value="ENSG00000161179.14"/>
</dbReference>
<dbReference type="Ensembl" id="ENST00000398873.4">
    <molecule id="A8MPS7-2"/>
    <property type="protein sequence ID" value="ENSP00000381847.3"/>
    <property type="gene ID" value="ENSG00000161179.14"/>
</dbReference>
<dbReference type="Ensembl" id="ENST00000415762.6">
    <molecule id="A8MPS7-3"/>
    <property type="protein sequence ID" value="ENSP00000402481.2"/>
    <property type="gene ID" value="ENSG00000161179.14"/>
</dbReference>
<dbReference type="GeneID" id="150223"/>
<dbReference type="KEGG" id="hsa:150223"/>
<dbReference type="MANE-Select" id="ENST00000292778.11">
    <property type="protein sequence ID" value="ENSP00000292778.6"/>
    <property type="RefSeq nucleotide sequence ID" value="NM_001017964.2"/>
    <property type="RefSeq protein sequence ID" value="NP_001017964.1"/>
</dbReference>
<dbReference type="UCSC" id="uc002zvb.4">
    <molecule id="A8MPS7-1"/>
    <property type="organism name" value="human"/>
</dbReference>
<dbReference type="AGR" id="HGNC:27158"/>
<dbReference type="CTD" id="150223"/>
<dbReference type="DisGeNET" id="150223"/>
<dbReference type="GeneCards" id="YDJC"/>
<dbReference type="HGNC" id="HGNC:27158">
    <property type="gene designation" value="YDJC"/>
</dbReference>
<dbReference type="HPA" id="ENSG00000161179">
    <property type="expression patterns" value="Low tissue specificity"/>
</dbReference>
<dbReference type="MIM" id="619770">
    <property type="type" value="gene"/>
</dbReference>
<dbReference type="neXtProt" id="NX_A8MPS7"/>
<dbReference type="OpenTargets" id="ENSG00000161179"/>
<dbReference type="PharmGKB" id="PA162409362"/>
<dbReference type="VEuPathDB" id="HostDB:ENSG00000161179"/>
<dbReference type="eggNOG" id="ENOG502RYFJ">
    <property type="taxonomic scope" value="Eukaryota"/>
</dbReference>
<dbReference type="GeneTree" id="ENSGT00390000002575"/>
<dbReference type="HOGENOM" id="CLU_064244_1_0_1"/>
<dbReference type="InParanoid" id="A8MPS7"/>
<dbReference type="OMA" id="GLHNCDW"/>
<dbReference type="OrthoDB" id="8908051at2759"/>
<dbReference type="PAN-GO" id="A8MPS7">
    <property type="GO annotations" value="1 GO annotation based on evolutionary models"/>
</dbReference>
<dbReference type="PhylomeDB" id="A8MPS7"/>
<dbReference type="TreeFam" id="TF329340"/>
<dbReference type="BRENDA" id="3.5.1.105">
    <property type="organism ID" value="2681"/>
</dbReference>
<dbReference type="PathwayCommons" id="A8MPS7"/>
<dbReference type="SignaLink" id="A8MPS7"/>
<dbReference type="BioGRID-ORCS" id="150223">
    <property type="hits" value="25 hits in 1161 CRISPR screens"/>
</dbReference>
<dbReference type="ChiTaRS" id="YDJC">
    <property type="organism name" value="human"/>
</dbReference>
<dbReference type="GenomeRNAi" id="150223"/>
<dbReference type="Pharos" id="A8MPS7">
    <property type="development level" value="Tbio"/>
</dbReference>
<dbReference type="PRO" id="PR:A8MPS7"/>
<dbReference type="Proteomes" id="UP000005640">
    <property type="component" value="Chromosome 22"/>
</dbReference>
<dbReference type="RNAct" id="A8MPS7">
    <property type="molecule type" value="protein"/>
</dbReference>
<dbReference type="Bgee" id="ENSG00000161179">
    <property type="expression patterns" value="Expressed in granulocyte and 119 other cell types or tissues"/>
</dbReference>
<dbReference type="ExpressionAtlas" id="A8MPS7">
    <property type="expression patterns" value="baseline and differential"/>
</dbReference>
<dbReference type="GO" id="GO:0019213">
    <property type="term" value="F:deacetylase activity"/>
    <property type="evidence" value="ECO:0000318"/>
    <property type="project" value="GO_Central"/>
</dbReference>
<dbReference type="GO" id="GO:0016787">
    <property type="term" value="F:hydrolase activity"/>
    <property type="evidence" value="ECO:0007669"/>
    <property type="project" value="UniProtKB-KW"/>
</dbReference>
<dbReference type="GO" id="GO:0000287">
    <property type="term" value="F:magnesium ion binding"/>
    <property type="evidence" value="ECO:0000250"/>
    <property type="project" value="UniProtKB"/>
</dbReference>
<dbReference type="GO" id="GO:0005975">
    <property type="term" value="P:carbohydrate metabolic process"/>
    <property type="evidence" value="ECO:0007669"/>
    <property type="project" value="InterPro"/>
</dbReference>
<dbReference type="CDD" id="cd10806">
    <property type="entry name" value="YdjC_like_2"/>
    <property type="match status" value="1"/>
</dbReference>
<dbReference type="FunFam" id="3.20.20.370:FF:000006">
    <property type="entry name" value="YdjC chitooligosaccharide deacetylase homolog"/>
    <property type="match status" value="1"/>
</dbReference>
<dbReference type="Gene3D" id="3.20.20.370">
    <property type="entry name" value="Glycoside hydrolase/deacetylase"/>
    <property type="match status" value="1"/>
</dbReference>
<dbReference type="InterPro" id="IPR011330">
    <property type="entry name" value="Glyco_hydro/deAcase_b/a-brl"/>
</dbReference>
<dbReference type="InterPro" id="IPR006879">
    <property type="entry name" value="YdjC-like"/>
</dbReference>
<dbReference type="PANTHER" id="PTHR31609:SF1">
    <property type="entry name" value="CARBOHYDRATE DEACETYLASE"/>
    <property type="match status" value="1"/>
</dbReference>
<dbReference type="PANTHER" id="PTHR31609">
    <property type="entry name" value="YDJC DEACETYLASE FAMILY MEMBER"/>
    <property type="match status" value="1"/>
</dbReference>
<dbReference type="Pfam" id="PF04794">
    <property type="entry name" value="YdjC"/>
    <property type="match status" value="1"/>
</dbReference>
<dbReference type="SUPFAM" id="SSF88713">
    <property type="entry name" value="Glycoside hydrolase/deacetylase"/>
    <property type="match status" value="1"/>
</dbReference>
<comment type="function">
    <text evidence="1">Probably catalyzes the deacetylation of acetylated carbohydrates an important step in the degradation of oligosaccharides.</text>
</comment>
<comment type="cofactor">
    <cofactor evidence="1">
        <name>Mg(2+)</name>
        <dbReference type="ChEBI" id="CHEBI:18420"/>
    </cofactor>
</comment>
<comment type="alternative products">
    <event type="alternative splicing"/>
    <isoform>
        <id>A8MPS7-1</id>
        <name>1</name>
        <sequence type="displayed"/>
    </isoform>
    <isoform>
        <id>A8MPS7-2</id>
        <name>2</name>
        <sequence type="described" ref="VSP_032786 VSP_032787"/>
    </isoform>
    <isoform>
        <id>A8MPS7-3</id>
        <name>3</name>
        <sequence type="described" ref="VSP_032784 VSP_032785"/>
    </isoform>
</comment>
<comment type="miscellaneous">
    <molecule>Isoform 3</molecule>
    <text evidence="3">May be produced at very low levels due to a premature stop codon in the mRNA, leading to nonsense-mediated mRNA decay.</text>
</comment>
<comment type="similarity">
    <text evidence="3">Belongs to the YdjC deacetylase family.</text>
</comment>
<reference key="1">
    <citation type="journal article" date="1999" name="Nature">
        <title>The DNA sequence of human chromosome 22.</title>
        <authorList>
            <person name="Dunham I."/>
            <person name="Hunt A.R."/>
            <person name="Collins J.E."/>
            <person name="Bruskiewich R."/>
            <person name="Beare D.M."/>
            <person name="Clamp M."/>
            <person name="Smink L.J."/>
            <person name="Ainscough R."/>
            <person name="Almeida J.P."/>
            <person name="Babbage A.K."/>
            <person name="Bagguley C."/>
            <person name="Bailey J."/>
            <person name="Barlow K.F."/>
            <person name="Bates K.N."/>
            <person name="Beasley O.P."/>
            <person name="Bird C.P."/>
            <person name="Blakey S.E."/>
            <person name="Bridgeman A.M."/>
            <person name="Buck D."/>
            <person name="Burgess J."/>
            <person name="Burrill W.D."/>
            <person name="Burton J."/>
            <person name="Carder C."/>
            <person name="Carter N.P."/>
            <person name="Chen Y."/>
            <person name="Clark G."/>
            <person name="Clegg S.M."/>
            <person name="Cobley V.E."/>
            <person name="Cole C.G."/>
            <person name="Collier R.E."/>
            <person name="Connor R."/>
            <person name="Conroy D."/>
            <person name="Corby N.R."/>
            <person name="Coville G.J."/>
            <person name="Cox A.V."/>
            <person name="Davis J."/>
            <person name="Dawson E."/>
            <person name="Dhami P.D."/>
            <person name="Dockree C."/>
            <person name="Dodsworth S.J."/>
            <person name="Durbin R.M."/>
            <person name="Ellington A.G."/>
            <person name="Evans K.L."/>
            <person name="Fey J.M."/>
            <person name="Fleming K."/>
            <person name="French L."/>
            <person name="Garner A.A."/>
            <person name="Gilbert J.G.R."/>
            <person name="Goward M.E."/>
            <person name="Grafham D.V."/>
            <person name="Griffiths M.N.D."/>
            <person name="Hall C."/>
            <person name="Hall R.E."/>
            <person name="Hall-Tamlyn G."/>
            <person name="Heathcott R.W."/>
            <person name="Ho S."/>
            <person name="Holmes S."/>
            <person name="Hunt S.E."/>
            <person name="Jones M.C."/>
            <person name="Kershaw J."/>
            <person name="Kimberley A.M."/>
            <person name="King A."/>
            <person name="Laird G.K."/>
            <person name="Langford C.F."/>
            <person name="Leversha M.A."/>
            <person name="Lloyd C."/>
            <person name="Lloyd D.M."/>
            <person name="Martyn I.D."/>
            <person name="Mashreghi-Mohammadi M."/>
            <person name="Matthews L.H."/>
            <person name="Mccann O.T."/>
            <person name="Mcclay J."/>
            <person name="Mclaren S."/>
            <person name="McMurray A.A."/>
            <person name="Milne S.A."/>
            <person name="Mortimore B.J."/>
            <person name="Odell C.N."/>
            <person name="Pavitt R."/>
            <person name="Pearce A.V."/>
            <person name="Pearson D."/>
            <person name="Phillimore B.J.C.T."/>
            <person name="Phillips S.H."/>
            <person name="Plumb R.W."/>
            <person name="Ramsay H."/>
            <person name="Ramsey Y."/>
            <person name="Rogers L."/>
            <person name="Ross M.T."/>
            <person name="Scott C.E."/>
            <person name="Sehra H.K."/>
            <person name="Skuce C.D."/>
            <person name="Smalley S."/>
            <person name="Smith M.L."/>
            <person name="Soderlund C."/>
            <person name="Spragon L."/>
            <person name="Steward C.A."/>
            <person name="Sulston J.E."/>
            <person name="Swann R.M."/>
            <person name="Vaudin M."/>
            <person name="Wall M."/>
            <person name="Wallis J.M."/>
            <person name="Whiteley M.N."/>
            <person name="Willey D.L."/>
            <person name="Williams L."/>
            <person name="Williams S.A."/>
            <person name="Williamson H."/>
            <person name="Wilmer T.E."/>
            <person name="Wilming L."/>
            <person name="Wright C.L."/>
            <person name="Hubbard T."/>
            <person name="Bentley D.R."/>
            <person name="Beck S."/>
            <person name="Rogers J."/>
            <person name="Shimizu N."/>
            <person name="Minoshima S."/>
            <person name="Kawasaki K."/>
            <person name="Sasaki T."/>
            <person name="Asakawa S."/>
            <person name="Kudoh J."/>
            <person name="Shintani A."/>
            <person name="Shibuya K."/>
            <person name="Yoshizaki Y."/>
            <person name="Aoki N."/>
            <person name="Mitsuyama S."/>
            <person name="Roe B.A."/>
            <person name="Chen F."/>
            <person name="Chu L."/>
            <person name="Crabtree J."/>
            <person name="Deschamps S."/>
            <person name="Do A."/>
            <person name="Do T."/>
            <person name="Dorman A."/>
            <person name="Fang F."/>
            <person name="Fu Y."/>
            <person name="Hu P."/>
            <person name="Hua A."/>
            <person name="Kenton S."/>
            <person name="Lai H."/>
            <person name="Lao H.I."/>
            <person name="Lewis J."/>
            <person name="Lewis S."/>
            <person name="Lin S.-P."/>
            <person name="Loh P."/>
            <person name="Malaj E."/>
            <person name="Nguyen T."/>
            <person name="Pan H."/>
            <person name="Phan S."/>
            <person name="Qi S."/>
            <person name="Qian Y."/>
            <person name="Ray L."/>
            <person name="Ren Q."/>
            <person name="Shaull S."/>
            <person name="Sloan D."/>
            <person name="Song L."/>
            <person name="Wang Q."/>
            <person name="Wang Y."/>
            <person name="Wang Z."/>
            <person name="White J."/>
            <person name="Willingham D."/>
            <person name="Wu H."/>
            <person name="Yao Z."/>
            <person name="Zhan M."/>
            <person name="Zhang G."/>
            <person name="Chissoe S."/>
            <person name="Murray J."/>
            <person name="Miller N."/>
            <person name="Minx P."/>
            <person name="Fulton R."/>
            <person name="Johnson D."/>
            <person name="Bemis G."/>
            <person name="Bentley D."/>
            <person name="Bradshaw H."/>
            <person name="Bourne S."/>
            <person name="Cordes M."/>
            <person name="Du Z."/>
            <person name="Fulton L."/>
            <person name="Goela D."/>
            <person name="Graves T."/>
            <person name="Hawkins J."/>
            <person name="Hinds K."/>
            <person name="Kemp K."/>
            <person name="Latreille P."/>
            <person name="Layman D."/>
            <person name="Ozersky P."/>
            <person name="Rohlfing T."/>
            <person name="Scheet P."/>
            <person name="Walker C."/>
            <person name="Wamsley A."/>
            <person name="Wohldmann P."/>
            <person name="Pepin K."/>
            <person name="Nelson J."/>
            <person name="Korf I."/>
            <person name="Bedell J.A."/>
            <person name="Hillier L.W."/>
            <person name="Mardis E."/>
            <person name="Waterston R."/>
            <person name="Wilson R."/>
            <person name="Emanuel B.S."/>
            <person name="Shaikh T."/>
            <person name="Kurahashi H."/>
            <person name="Saitta S."/>
            <person name="Budarf M.L."/>
            <person name="McDermid H.E."/>
            <person name="Johnson A."/>
            <person name="Wong A.C.C."/>
            <person name="Morrow B.E."/>
            <person name="Edelmann L."/>
            <person name="Kim U.J."/>
            <person name="Shizuya H."/>
            <person name="Simon M.I."/>
            <person name="Dumanski J.P."/>
            <person name="Peyrard M."/>
            <person name="Kedra D."/>
            <person name="Seroussi E."/>
            <person name="Fransson I."/>
            <person name="Tapia I."/>
            <person name="Bruder C.E."/>
            <person name="O'Brien K.P."/>
            <person name="Wilkinson P."/>
            <person name="Bodenteich A."/>
            <person name="Hartman K."/>
            <person name="Hu X."/>
            <person name="Khan A.S."/>
            <person name="Lane L."/>
            <person name="Tilahun Y."/>
            <person name="Wright H."/>
        </authorList>
    </citation>
    <scope>NUCLEOTIDE SEQUENCE [LARGE SCALE GENOMIC DNA]</scope>
</reference>
<reference key="2">
    <citation type="submission" date="2005-07" db="EMBL/GenBank/DDBJ databases">
        <authorList>
            <person name="Mural R.J."/>
            <person name="Istrail S."/>
            <person name="Sutton G.G."/>
            <person name="Florea L."/>
            <person name="Halpern A.L."/>
            <person name="Mobarry C.M."/>
            <person name="Lippert R."/>
            <person name="Walenz B."/>
            <person name="Shatkay H."/>
            <person name="Dew I."/>
            <person name="Miller J.R."/>
            <person name="Flanigan M.J."/>
            <person name="Edwards N.J."/>
            <person name="Bolanos R."/>
            <person name="Fasulo D."/>
            <person name="Halldorsson B.V."/>
            <person name="Hannenhalli S."/>
            <person name="Turner R."/>
            <person name="Yooseph S."/>
            <person name="Lu F."/>
            <person name="Nusskern D.R."/>
            <person name="Shue B.C."/>
            <person name="Zheng X.H."/>
            <person name="Zhong F."/>
            <person name="Delcher A.L."/>
            <person name="Huson D.H."/>
            <person name="Kravitz S.A."/>
            <person name="Mouchard L."/>
            <person name="Reinert K."/>
            <person name="Remington K.A."/>
            <person name="Clark A.G."/>
            <person name="Waterman M.S."/>
            <person name="Eichler E.E."/>
            <person name="Adams M.D."/>
            <person name="Hunkapiller M.W."/>
            <person name="Myers E.W."/>
            <person name="Venter J.C."/>
        </authorList>
    </citation>
    <scope>NUCLEOTIDE SEQUENCE [LARGE SCALE GENOMIC DNA]</scope>
</reference>
<reference key="3">
    <citation type="journal article" date="2004" name="Genome Res.">
        <title>The status, quality, and expansion of the NIH full-length cDNA project: the Mammalian Gene Collection (MGC).</title>
        <authorList>
            <consortium name="The MGC Project Team"/>
        </authorList>
    </citation>
    <scope>NUCLEOTIDE SEQUENCE [LARGE SCALE MRNA] (ISOFORMS 2 AND 3)</scope>
    <source>
        <tissue>Brain</tissue>
    </source>
</reference>
<reference key="4">
    <citation type="journal article" date="2011" name="BMC Syst. Biol.">
        <title>Initial characterization of the human central proteome.</title>
        <authorList>
            <person name="Burkard T.R."/>
            <person name="Planyavsky M."/>
            <person name="Kaupe I."/>
            <person name="Breitwieser F.P."/>
            <person name="Buerckstuemmer T."/>
            <person name="Bennett K.L."/>
            <person name="Superti-Furga G."/>
            <person name="Colinge J."/>
        </authorList>
    </citation>
    <scope>IDENTIFICATION BY MASS SPECTROMETRY [LARGE SCALE ANALYSIS]</scope>
</reference>
<name>YDJC_HUMAN</name>
<organism>
    <name type="scientific">Homo sapiens</name>
    <name type="common">Human</name>
    <dbReference type="NCBI Taxonomy" id="9606"/>
    <lineage>
        <taxon>Eukaryota</taxon>
        <taxon>Metazoa</taxon>
        <taxon>Chordata</taxon>
        <taxon>Craniata</taxon>
        <taxon>Vertebrata</taxon>
        <taxon>Euteleostomi</taxon>
        <taxon>Mammalia</taxon>
        <taxon>Eutheria</taxon>
        <taxon>Euarchontoglires</taxon>
        <taxon>Primates</taxon>
        <taxon>Haplorrhini</taxon>
        <taxon>Catarrhini</taxon>
        <taxon>Hominidae</taxon>
        <taxon>Homo</taxon>
    </lineage>
</organism>
<protein>
    <recommendedName>
        <fullName evidence="1">Carbohydrate deacetylase</fullName>
        <ecNumber evidence="1">3.5.1.-</ecNumber>
    </recommendedName>
</protein>
<gene>
    <name type="primary">YDJC</name>
</gene>
<accession>A8MPS7</accession>
<accession>Q2YDT4</accession>
<accession>Q4V9R7</accession>
<proteinExistence type="evidence at protein level"/>